<comment type="function">
    <text evidence="1">RuBisCO catalyzes two reactions: the carboxylation of D-ribulose 1,5-bisphosphate, the primary event in carbon dioxide fixation, as well as the oxidative fragmentation of the pentose substrate in the photorespiration process. Both reactions occur simultaneously and in competition at the same active site.</text>
</comment>
<comment type="catalytic activity">
    <reaction evidence="1">
        <text>2 (2R)-3-phosphoglycerate + 2 H(+) = D-ribulose 1,5-bisphosphate + CO2 + H2O</text>
        <dbReference type="Rhea" id="RHEA:23124"/>
        <dbReference type="ChEBI" id="CHEBI:15377"/>
        <dbReference type="ChEBI" id="CHEBI:15378"/>
        <dbReference type="ChEBI" id="CHEBI:16526"/>
        <dbReference type="ChEBI" id="CHEBI:57870"/>
        <dbReference type="ChEBI" id="CHEBI:58272"/>
        <dbReference type="EC" id="4.1.1.39"/>
    </reaction>
</comment>
<comment type="catalytic activity">
    <reaction evidence="1">
        <text>D-ribulose 1,5-bisphosphate + O2 = 2-phosphoglycolate + (2R)-3-phosphoglycerate + 2 H(+)</text>
        <dbReference type="Rhea" id="RHEA:36631"/>
        <dbReference type="ChEBI" id="CHEBI:15378"/>
        <dbReference type="ChEBI" id="CHEBI:15379"/>
        <dbReference type="ChEBI" id="CHEBI:57870"/>
        <dbReference type="ChEBI" id="CHEBI:58033"/>
        <dbReference type="ChEBI" id="CHEBI:58272"/>
    </reaction>
</comment>
<comment type="cofactor">
    <cofactor evidence="1">
        <name>Mg(2+)</name>
        <dbReference type="ChEBI" id="CHEBI:18420"/>
    </cofactor>
    <text evidence="1">Binds 1 Mg(2+) ion per subunit.</text>
</comment>
<comment type="subunit">
    <text evidence="1">Heterohexadecamer of 8 large chains and 8 small chains.</text>
</comment>
<comment type="subcellular location">
    <subcellularLocation>
        <location>Plastid</location>
        <location>Chloroplast</location>
    </subcellularLocation>
</comment>
<comment type="miscellaneous">
    <text evidence="1">The basic functional RuBisCO is composed of a large chain homodimer in a 'head-to-tail' conformation. In form I RuBisCO this homodimer is arranged in a barrel-like tetramer with the small subunits forming a tetrameric 'cap' on each end of the 'barrel'.</text>
</comment>
<comment type="similarity">
    <text evidence="1">Belongs to the RuBisCO large chain family. Type I subfamily.</text>
</comment>
<keyword id="KW-0113">Calvin cycle</keyword>
<keyword id="KW-0120">Carbon dioxide fixation</keyword>
<keyword id="KW-0150">Chloroplast</keyword>
<keyword id="KW-0456">Lyase</keyword>
<keyword id="KW-0460">Magnesium</keyword>
<keyword id="KW-0479">Metal-binding</keyword>
<keyword id="KW-0503">Monooxygenase</keyword>
<keyword id="KW-0560">Oxidoreductase</keyword>
<keyword id="KW-0601">Photorespiration</keyword>
<keyword id="KW-0602">Photosynthesis</keyword>
<keyword id="KW-0934">Plastid</keyword>
<protein>
    <recommendedName>
        <fullName evidence="1">Ribulose bisphosphate carboxylase large chain</fullName>
        <shortName evidence="1">RuBisCO large subunit</shortName>
        <ecNumber evidence="1">4.1.1.39</ecNumber>
    </recommendedName>
</protein>
<name>RBL_PYRYE</name>
<proteinExistence type="inferred from homology"/>
<organism>
    <name type="scientific">Pyropia yezoensis</name>
    <name type="common">Susabi-nori</name>
    <name type="synonym">Porphyra yezoensis</name>
    <dbReference type="NCBI Taxonomy" id="2788"/>
    <lineage>
        <taxon>Eukaryota</taxon>
        <taxon>Rhodophyta</taxon>
        <taxon>Bangiophyceae</taxon>
        <taxon>Bangiales</taxon>
        <taxon>Bangiaceae</taxon>
        <taxon>Pyropia</taxon>
    </lineage>
</organism>
<dbReference type="EC" id="4.1.1.39" evidence="1"/>
<dbReference type="EMBL" id="AB118574">
    <property type="protein sequence ID" value="BAC84915.1"/>
    <property type="molecule type" value="Genomic_DNA"/>
</dbReference>
<dbReference type="EMBL" id="AB118575">
    <property type="protein sequence ID" value="BAC84917.1"/>
    <property type="molecule type" value="Genomic_DNA"/>
</dbReference>
<dbReference type="EMBL" id="AB118587">
    <property type="protein sequence ID" value="BAC84941.1"/>
    <property type="molecule type" value="Genomic_DNA"/>
</dbReference>
<dbReference type="EMBL" id="AB118588">
    <property type="protein sequence ID" value="BAC84943.1"/>
    <property type="molecule type" value="Genomic_DNA"/>
</dbReference>
<dbReference type="EMBL" id="AB118589">
    <property type="protein sequence ID" value="BAC84945.1"/>
    <property type="molecule type" value="Genomic_DNA"/>
</dbReference>
<dbReference type="EMBL" id="AB118590">
    <property type="protein sequence ID" value="BAC84947.1"/>
    <property type="molecule type" value="Genomic_DNA"/>
</dbReference>
<dbReference type="EMBL" id="DQ227860">
    <property type="protein sequence ID" value="ABB22726.1"/>
    <property type="molecule type" value="Genomic_DNA"/>
</dbReference>
<dbReference type="EMBL" id="DQ227861">
    <property type="protein sequence ID" value="ABB22727.1"/>
    <property type="molecule type" value="Genomic_DNA"/>
</dbReference>
<dbReference type="EMBL" id="DQ227862">
    <property type="protein sequence ID" value="ABB22728.1"/>
    <property type="molecule type" value="Genomic_DNA"/>
</dbReference>
<dbReference type="EMBL" id="DQ227863">
    <property type="protein sequence ID" value="ABB22729.1"/>
    <property type="molecule type" value="Genomic_DNA"/>
</dbReference>
<dbReference type="EMBL" id="DQ227864">
    <property type="protein sequence ID" value="ABB22730.1"/>
    <property type="molecule type" value="Genomic_DNA"/>
</dbReference>
<dbReference type="EMBL" id="DQ227865">
    <property type="protein sequence ID" value="ABB22731.1"/>
    <property type="molecule type" value="Genomic_DNA"/>
</dbReference>
<dbReference type="EMBL" id="DQ227866">
    <property type="protein sequence ID" value="ABB22732.1"/>
    <property type="molecule type" value="Genomic_DNA"/>
</dbReference>
<dbReference type="EMBL" id="AP006715">
    <property type="protein sequence ID" value="BAE92350.1"/>
    <property type="molecule type" value="Genomic_DNA"/>
</dbReference>
<dbReference type="EMBL" id="AF021032">
    <property type="protein sequence ID" value="AAC28122.2"/>
    <property type="molecule type" value="Genomic_DNA"/>
</dbReference>
<dbReference type="RefSeq" id="YP_536907.1">
    <property type="nucleotide sequence ID" value="NC_007932.1"/>
</dbReference>
<dbReference type="SMR" id="Q760T5"/>
<dbReference type="GeneID" id="3978792"/>
<dbReference type="GO" id="GO:0009507">
    <property type="term" value="C:chloroplast"/>
    <property type="evidence" value="ECO:0007669"/>
    <property type="project" value="UniProtKB-SubCell"/>
</dbReference>
<dbReference type="GO" id="GO:0000287">
    <property type="term" value="F:magnesium ion binding"/>
    <property type="evidence" value="ECO:0007669"/>
    <property type="project" value="UniProtKB-UniRule"/>
</dbReference>
<dbReference type="GO" id="GO:0004497">
    <property type="term" value="F:monooxygenase activity"/>
    <property type="evidence" value="ECO:0007669"/>
    <property type="project" value="UniProtKB-KW"/>
</dbReference>
<dbReference type="GO" id="GO:0016984">
    <property type="term" value="F:ribulose-bisphosphate carboxylase activity"/>
    <property type="evidence" value="ECO:0007669"/>
    <property type="project" value="UniProtKB-UniRule"/>
</dbReference>
<dbReference type="GO" id="GO:0019253">
    <property type="term" value="P:reductive pentose-phosphate cycle"/>
    <property type="evidence" value="ECO:0007669"/>
    <property type="project" value="UniProtKB-UniRule"/>
</dbReference>
<dbReference type="CDD" id="cd08212">
    <property type="entry name" value="RuBisCO_large_I"/>
    <property type="match status" value="1"/>
</dbReference>
<dbReference type="Gene3D" id="3.20.20.110">
    <property type="entry name" value="Ribulose bisphosphate carboxylase, large subunit, C-terminal domain"/>
    <property type="match status" value="1"/>
</dbReference>
<dbReference type="Gene3D" id="3.30.70.150">
    <property type="entry name" value="RuBisCO large subunit, N-terminal domain"/>
    <property type="match status" value="1"/>
</dbReference>
<dbReference type="HAMAP" id="MF_01338">
    <property type="entry name" value="RuBisCO_L_type1"/>
    <property type="match status" value="1"/>
</dbReference>
<dbReference type="InterPro" id="IPR033966">
    <property type="entry name" value="RuBisCO"/>
</dbReference>
<dbReference type="InterPro" id="IPR020878">
    <property type="entry name" value="RuBisCo_large_chain_AS"/>
</dbReference>
<dbReference type="InterPro" id="IPR000685">
    <property type="entry name" value="RuBisCO_lsu_C"/>
</dbReference>
<dbReference type="InterPro" id="IPR036376">
    <property type="entry name" value="RuBisCO_lsu_C_sf"/>
</dbReference>
<dbReference type="InterPro" id="IPR017443">
    <property type="entry name" value="RuBisCO_lsu_fd_N"/>
</dbReference>
<dbReference type="InterPro" id="IPR036422">
    <property type="entry name" value="RuBisCO_lsu_N_sf"/>
</dbReference>
<dbReference type="InterPro" id="IPR020888">
    <property type="entry name" value="RuBisCO_lsuI"/>
</dbReference>
<dbReference type="NCBIfam" id="NF003252">
    <property type="entry name" value="PRK04208.1"/>
    <property type="match status" value="1"/>
</dbReference>
<dbReference type="PANTHER" id="PTHR42704">
    <property type="entry name" value="RIBULOSE BISPHOSPHATE CARBOXYLASE"/>
    <property type="match status" value="1"/>
</dbReference>
<dbReference type="PANTHER" id="PTHR42704:SF17">
    <property type="entry name" value="RIBULOSE BISPHOSPHATE CARBOXYLASE LARGE CHAIN"/>
    <property type="match status" value="1"/>
</dbReference>
<dbReference type="Pfam" id="PF00016">
    <property type="entry name" value="RuBisCO_large"/>
    <property type="match status" value="1"/>
</dbReference>
<dbReference type="Pfam" id="PF02788">
    <property type="entry name" value="RuBisCO_large_N"/>
    <property type="match status" value="1"/>
</dbReference>
<dbReference type="SFLD" id="SFLDG01052">
    <property type="entry name" value="RuBisCO"/>
    <property type="match status" value="1"/>
</dbReference>
<dbReference type="SFLD" id="SFLDS00014">
    <property type="entry name" value="RuBisCO"/>
    <property type="match status" value="1"/>
</dbReference>
<dbReference type="SFLD" id="SFLDG00301">
    <property type="entry name" value="RuBisCO-like_proteins"/>
    <property type="match status" value="1"/>
</dbReference>
<dbReference type="SUPFAM" id="SSF51649">
    <property type="entry name" value="RuBisCo, C-terminal domain"/>
    <property type="match status" value="1"/>
</dbReference>
<dbReference type="SUPFAM" id="SSF54966">
    <property type="entry name" value="RuBisCO, large subunit, small (N-terminal) domain"/>
    <property type="match status" value="1"/>
</dbReference>
<dbReference type="PROSITE" id="PS00157">
    <property type="entry name" value="RUBISCO_LARGE"/>
    <property type="match status" value="1"/>
</dbReference>
<accession>Q760T5</accession>
<accession>O19857</accession>
<accession>Q1XDR1</accession>
<evidence type="ECO:0000255" key="1">
    <source>
        <dbReference type="HAMAP-Rule" id="MF_01338"/>
    </source>
</evidence>
<evidence type="ECO:0000305" key="2"/>
<geneLocation type="chloroplast"/>
<feature type="chain" id="PRO_0000251433" description="Ribulose bisphosphate carboxylase large chain">
    <location>
        <begin position="1"/>
        <end position="488"/>
    </location>
</feature>
<feature type="active site" description="Proton acceptor" evidence="1">
    <location>
        <position position="179"/>
    </location>
</feature>
<feature type="active site" description="Proton acceptor" evidence="1">
    <location>
        <position position="297"/>
    </location>
</feature>
<feature type="binding site" description="in homodimeric partner" evidence="1">
    <location>
        <position position="127"/>
    </location>
    <ligand>
        <name>substrate</name>
    </ligand>
</feature>
<feature type="binding site" evidence="1">
    <location>
        <position position="177"/>
    </location>
    <ligand>
        <name>substrate</name>
    </ligand>
</feature>
<feature type="binding site" evidence="1">
    <location>
        <position position="181"/>
    </location>
    <ligand>
        <name>substrate</name>
    </ligand>
</feature>
<feature type="binding site" description="via carbamate group" evidence="1">
    <location>
        <position position="205"/>
    </location>
    <ligand>
        <name>Mg(2+)</name>
        <dbReference type="ChEBI" id="CHEBI:18420"/>
    </ligand>
</feature>
<feature type="binding site" evidence="1">
    <location>
        <position position="207"/>
    </location>
    <ligand>
        <name>Mg(2+)</name>
        <dbReference type="ChEBI" id="CHEBI:18420"/>
    </ligand>
</feature>
<feature type="binding site" evidence="1">
    <location>
        <position position="208"/>
    </location>
    <ligand>
        <name>Mg(2+)</name>
        <dbReference type="ChEBI" id="CHEBI:18420"/>
    </ligand>
</feature>
<feature type="binding site" evidence="1">
    <location>
        <position position="298"/>
    </location>
    <ligand>
        <name>substrate</name>
    </ligand>
</feature>
<feature type="binding site" evidence="1">
    <location>
        <position position="330"/>
    </location>
    <ligand>
        <name>substrate</name>
    </ligand>
</feature>
<feature type="binding site" evidence="1">
    <location>
        <position position="382"/>
    </location>
    <ligand>
        <name>substrate</name>
    </ligand>
</feature>
<feature type="site" description="Transition state stabilizer" evidence="1">
    <location>
        <position position="337"/>
    </location>
</feature>
<feature type="modified residue" description="N6-carboxylysine" evidence="1">
    <location>
        <position position="205"/>
    </location>
</feature>
<feature type="sequence variant" description="In strain: U-51.">
    <original>I</original>
    <variation>F</variation>
    <location>
        <position position="61"/>
    </location>
</feature>
<feature type="sequence variant" description="In strain: U-51.">
    <original>T</original>
    <variation>P</variation>
    <location>
        <position position="67"/>
    </location>
</feature>
<feature type="sequence conflict" description="In Ref. 4; AAC28122." evidence="2" ref="4">
    <original>L</original>
    <variation>F</variation>
    <location>
        <position position="343"/>
    </location>
</feature>
<gene>
    <name evidence="1" type="primary">rbcL</name>
</gene>
<reference key="1">
    <citation type="submission" date="2003-08" db="EMBL/GenBank/DDBJ databases">
        <title>Species determination utilizing Porphyra (Rhodophyta) plastid DNA RuBisCo sequences.</title>
        <authorList>
            <person name="Kito H."/>
            <person name="Kunimoto M."/>
            <person name="Mizukami Y."/>
            <person name="Murase N."/>
            <person name="Kuroki T."/>
            <person name="Taruta M."/>
            <person name="Levine I."/>
        </authorList>
    </citation>
    <scope>NUCLEOTIDE SEQUENCE [GENOMIC DNA]</scope>
    <source>
        <strain>F6-1</strain>
        <strain>Saga-5</strain>
        <strain>Saga-5L</strain>
        <tissue>Thallus</tissue>
    </source>
</reference>
<reference key="2">
    <citation type="journal article" date="2005" name="Algae">
        <title>DNA sequences and identification of Porphyra cultivated by natural seeding on the southwest coast of Korea.</title>
        <authorList>
            <person name="Hwang M.S."/>
            <person name="Kim S.-M."/>
            <person name="Ha D.-S."/>
            <person name="Baek J.M."/>
            <person name="Kim H.-S."/>
            <person name="Choi H.-G."/>
        </authorList>
    </citation>
    <scope>NUCLEOTIDE SEQUENCE [GENOMIC DNA]</scope>
    <source>
        <strain>NS001</strain>
        <strain>NS002</strain>
        <strain>NS003</strain>
        <strain>NS004</strain>
        <strain>NS005</strain>
        <strain>NS006</strain>
        <strain>NS007</strain>
        <tissue>Thallus</tissue>
    </source>
</reference>
<reference key="3">
    <citation type="submission" date="2003-11" db="EMBL/GenBank/DDBJ databases">
        <title>Whole genome sequence of Porphyra yezoensis chloroplast.</title>
        <authorList>
            <person name="Kunimoto M."/>
            <person name="Morishima K."/>
            <person name="Yoshikawa M."/>
            <person name="Fukuda S."/>
            <person name="Kobayashi T."/>
            <person name="Kobayashi M."/>
            <person name="Okazaki T."/>
            <person name="Ohara I."/>
            <person name="Nakayama I."/>
        </authorList>
    </citation>
    <scope>NUCLEOTIDE SEQUENCE [LARGE SCALE GENOMIC DNA]</scope>
    <source>
        <strain>U-51</strain>
    </source>
</reference>
<reference key="4">
    <citation type="submission" date="2003-07" db="EMBL/GenBank/DDBJ databases">
        <title>A comparison of the phylogenetic relationships of Porphyra from the coast of New England inferred from rbcL and 18S ribosomal RNA.</title>
        <authorList>
            <person name="Klein A.S."/>
            <person name="Taylor H.A."/>
            <person name="Cain D.F."/>
            <person name="Yarish C."/>
            <person name="Neefus C.D."/>
            <person name="Mathieson A.C."/>
        </authorList>
    </citation>
    <scope>NUCLEOTIDE SEQUENCE [GENOMIC DNA] OF 30-488</scope>
    <source>
        <strain>U-51</strain>
    </source>
</reference>
<sequence length="488" mass="54060">MSQSVESRTRIKSERYESGVIPYAKMGYWDADYVIKETDILALFRITPQPGVDPIEASAAIAGESSTATWTVVWTDLLTACDLYRAKAYRVDPVPNVADQYFAYIAYDIDLFEEGSIANLTASIIGNVFGFKAVKALRLEDMRMPVAYLKTFQGPATGLIVERERMDKFGRPFLGATVKPKLGLSGKNYGRVVYEGLKGGLDFLKDDENINSQPFMRWRERFLYSMEGVNKASASAGEIKGHYLNVTAATMEDMYERAEFSKEVGSIICMIDLVIGYTAIQSMAIWARKHDMILHLHRAGNSTYSRQKNHGMNFRVICKWMRMAGVDHIHAGTVVGKLEGDPLMIKGFYNTLLESDTDINLPQGLFFAQNWASLRKVVPVASGGIHAGQMHQLLDYLGDDVVLQFGGGTIGHPDGIQAGATANRVALESMVMARNEGRNYVAEGPQILRDAAKTCGPLQTALDLWKDISFNYTSTDTADFVETPTANI</sequence>